<organism>
    <name type="scientific">Danio rerio</name>
    <name type="common">Zebrafish</name>
    <name type="synonym">Brachydanio rerio</name>
    <dbReference type="NCBI Taxonomy" id="7955"/>
    <lineage>
        <taxon>Eukaryota</taxon>
        <taxon>Metazoa</taxon>
        <taxon>Chordata</taxon>
        <taxon>Craniata</taxon>
        <taxon>Vertebrata</taxon>
        <taxon>Euteleostomi</taxon>
        <taxon>Actinopterygii</taxon>
        <taxon>Neopterygii</taxon>
        <taxon>Teleostei</taxon>
        <taxon>Ostariophysi</taxon>
        <taxon>Cypriniformes</taxon>
        <taxon>Danionidae</taxon>
        <taxon>Danioninae</taxon>
        <taxon>Danio</taxon>
    </lineage>
</organism>
<comment type="function">
    <text evidence="1">Anchoring protein that mediates the subcellular compartmentation of cAMP-dependent protein kinase (PKA type II).</text>
</comment>
<comment type="subcellular location">
    <subcellularLocation>
        <location evidence="1">Cytoplasm</location>
    </subcellularLocation>
</comment>
<comment type="domain">
    <text evidence="1">RII-binding site, predicted to form an amphipathic helix, could participate in protein-protein interactions with a complementary surface on the R-subunit dimer.</text>
</comment>
<comment type="similarity">
    <text evidence="3">Belongs to the AKAP110 family.</text>
</comment>
<dbReference type="EMBL" id="BX908751">
    <property type="protein sequence ID" value="CAK05475.1"/>
    <property type="molecule type" value="Genomic_DNA"/>
</dbReference>
<dbReference type="EMBL" id="BX649602">
    <property type="protein sequence ID" value="CAK05475.1"/>
    <property type="status" value="JOINED"/>
    <property type="molecule type" value="Genomic_DNA"/>
</dbReference>
<dbReference type="EMBL" id="BX649602">
    <property type="protein sequence ID" value="CAM56518.1"/>
    <property type="molecule type" value="Genomic_DNA"/>
</dbReference>
<dbReference type="EMBL" id="BX908751">
    <property type="protein sequence ID" value="CAM56518.1"/>
    <property type="status" value="JOINED"/>
    <property type="molecule type" value="Genomic_DNA"/>
</dbReference>
<dbReference type="RefSeq" id="NP_001076514.1">
    <property type="nucleotide sequence ID" value="NM_001083045.1"/>
</dbReference>
<dbReference type="FunCoup" id="Q1LV19">
    <property type="interactions" value="975"/>
</dbReference>
<dbReference type="STRING" id="7955.ENSDARP00000040668"/>
<dbReference type="PaxDb" id="7955-ENSDARP00000040668"/>
<dbReference type="Ensembl" id="ENSDART00000040669">
    <property type="protein sequence ID" value="ENSDARP00000040668"/>
    <property type="gene ID" value="ENSDARG00000017429"/>
</dbReference>
<dbReference type="GeneID" id="100034387"/>
<dbReference type="KEGG" id="dre:100034387"/>
<dbReference type="AGR" id="ZFIN:ZDB-GENE-050419-32"/>
<dbReference type="CTD" id="80309"/>
<dbReference type="ZFIN" id="ZDB-GENE-050419-32">
    <property type="gene designation" value="sphkap"/>
</dbReference>
<dbReference type="eggNOG" id="ENOG502QQ6Q">
    <property type="taxonomic scope" value="Eukaryota"/>
</dbReference>
<dbReference type="HOGENOM" id="CLU_243215_0_0_1"/>
<dbReference type="InParanoid" id="Q1LV19"/>
<dbReference type="OMA" id="VNVFANE"/>
<dbReference type="OrthoDB" id="6154436at2759"/>
<dbReference type="PhylomeDB" id="Q1LV19"/>
<dbReference type="TreeFam" id="TF105426"/>
<dbReference type="PRO" id="PR:Q1LV19"/>
<dbReference type="Proteomes" id="UP000000437">
    <property type="component" value="Alternate scaffold 18"/>
</dbReference>
<dbReference type="Proteomes" id="UP000000437">
    <property type="component" value="Chromosome 18"/>
</dbReference>
<dbReference type="Bgee" id="ENSDARG00000017429">
    <property type="expression patterns" value="Expressed in brain and 4 other cell types or tissues"/>
</dbReference>
<dbReference type="GO" id="GO:0005737">
    <property type="term" value="C:cytoplasm"/>
    <property type="evidence" value="ECO:0000318"/>
    <property type="project" value="GO_Central"/>
</dbReference>
<dbReference type="GO" id="GO:0005739">
    <property type="term" value="C:mitochondrion"/>
    <property type="evidence" value="ECO:0000318"/>
    <property type="project" value="GO_Central"/>
</dbReference>
<dbReference type="GO" id="GO:0051018">
    <property type="term" value="F:protein kinase A binding"/>
    <property type="evidence" value="ECO:0000318"/>
    <property type="project" value="GO_Central"/>
</dbReference>
<dbReference type="InterPro" id="IPR008382">
    <property type="entry name" value="SPHK1-interactor_AKAP_110"/>
</dbReference>
<dbReference type="PANTHER" id="PTHR10226">
    <property type="entry name" value="A KINASE ANCHOR PROTEIN"/>
    <property type="match status" value="1"/>
</dbReference>
<dbReference type="PANTHER" id="PTHR10226:SF7">
    <property type="entry name" value="A-KINASE ANCHOR PROTEIN SPHKAP"/>
    <property type="match status" value="1"/>
</dbReference>
<keyword id="KW-0963">Cytoplasm</keyword>
<keyword id="KW-1185">Reference proteome</keyword>
<name>SPKAP_DANRE</name>
<proteinExistence type="inferred from homology"/>
<accession>Q1LV19</accession>
<reference key="1">
    <citation type="journal article" date="2013" name="Nature">
        <title>The zebrafish reference genome sequence and its relationship to the human genome.</title>
        <authorList>
            <person name="Howe K."/>
            <person name="Clark M.D."/>
            <person name="Torroja C.F."/>
            <person name="Torrance J."/>
            <person name="Berthelot C."/>
            <person name="Muffato M."/>
            <person name="Collins J.E."/>
            <person name="Humphray S."/>
            <person name="McLaren K."/>
            <person name="Matthews L."/>
            <person name="McLaren S."/>
            <person name="Sealy I."/>
            <person name="Caccamo M."/>
            <person name="Churcher C."/>
            <person name="Scott C."/>
            <person name="Barrett J.C."/>
            <person name="Koch R."/>
            <person name="Rauch G.J."/>
            <person name="White S."/>
            <person name="Chow W."/>
            <person name="Kilian B."/>
            <person name="Quintais L.T."/>
            <person name="Guerra-Assuncao J.A."/>
            <person name="Zhou Y."/>
            <person name="Gu Y."/>
            <person name="Yen J."/>
            <person name="Vogel J.H."/>
            <person name="Eyre T."/>
            <person name="Redmond S."/>
            <person name="Banerjee R."/>
            <person name="Chi J."/>
            <person name="Fu B."/>
            <person name="Langley E."/>
            <person name="Maguire S.F."/>
            <person name="Laird G.K."/>
            <person name="Lloyd D."/>
            <person name="Kenyon E."/>
            <person name="Donaldson S."/>
            <person name="Sehra H."/>
            <person name="Almeida-King J."/>
            <person name="Loveland J."/>
            <person name="Trevanion S."/>
            <person name="Jones M."/>
            <person name="Quail M."/>
            <person name="Willey D."/>
            <person name="Hunt A."/>
            <person name="Burton J."/>
            <person name="Sims S."/>
            <person name="McLay K."/>
            <person name="Plumb B."/>
            <person name="Davis J."/>
            <person name="Clee C."/>
            <person name="Oliver K."/>
            <person name="Clark R."/>
            <person name="Riddle C."/>
            <person name="Elliot D."/>
            <person name="Threadgold G."/>
            <person name="Harden G."/>
            <person name="Ware D."/>
            <person name="Begum S."/>
            <person name="Mortimore B."/>
            <person name="Kerry G."/>
            <person name="Heath P."/>
            <person name="Phillimore B."/>
            <person name="Tracey A."/>
            <person name="Corby N."/>
            <person name="Dunn M."/>
            <person name="Johnson C."/>
            <person name="Wood J."/>
            <person name="Clark S."/>
            <person name="Pelan S."/>
            <person name="Griffiths G."/>
            <person name="Smith M."/>
            <person name="Glithero R."/>
            <person name="Howden P."/>
            <person name="Barker N."/>
            <person name="Lloyd C."/>
            <person name="Stevens C."/>
            <person name="Harley J."/>
            <person name="Holt K."/>
            <person name="Panagiotidis G."/>
            <person name="Lovell J."/>
            <person name="Beasley H."/>
            <person name="Henderson C."/>
            <person name="Gordon D."/>
            <person name="Auger K."/>
            <person name="Wright D."/>
            <person name="Collins J."/>
            <person name="Raisen C."/>
            <person name="Dyer L."/>
            <person name="Leung K."/>
            <person name="Robertson L."/>
            <person name="Ambridge K."/>
            <person name="Leongamornlert D."/>
            <person name="McGuire S."/>
            <person name="Gilderthorp R."/>
            <person name="Griffiths C."/>
            <person name="Manthravadi D."/>
            <person name="Nichol S."/>
            <person name="Barker G."/>
            <person name="Whitehead S."/>
            <person name="Kay M."/>
            <person name="Brown J."/>
            <person name="Murnane C."/>
            <person name="Gray E."/>
            <person name="Humphries M."/>
            <person name="Sycamore N."/>
            <person name="Barker D."/>
            <person name="Saunders D."/>
            <person name="Wallis J."/>
            <person name="Babbage A."/>
            <person name="Hammond S."/>
            <person name="Mashreghi-Mohammadi M."/>
            <person name="Barr L."/>
            <person name="Martin S."/>
            <person name="Wray P."/>
            <person name="Ellington A."/>
            <person name="Matthews N."/>
            <person name="Ellwood M."/>
            <person name="Woodmansey R."/>
            <person name="Clark G."/>
            <person name="Cooper J."/>
            <person name="Tromans A."/>
            <person name="Grafham D."/>
            <person name="Skuce C."/>
            <person name="Pandian R."/>
            <person name="Andrews R."/>
            <person name="Harrison E."/>
            <person name="Kimberley A."/>
            <person name="Garnett J."/>
            <person name="Fosker N."/>
            <person name="Hall R."/>
            <person name="Garner P."/>
            <person name="Kelly D."/>
            <person name="Bird C."/>
            <person name="Palmer S."/>
            <person name="Gehring I."/>
            <person name="Berger A."/>
            <person name="Dooley C.M."/>
            <person name="Ersan-Urun Z."/>
            <person name="Eser C."/>
            <person name="Geiger H."/>
            <person name="Geisler M."/>
            <person name="Karotki L."/>
            <person name="Kirn A."/>
            <person name="Konantz J."/>
            <person name="Konantz M."/>
            <person name="Oberlander M."/>
            <person name="Rudolph-Geiger S."/>
            <person name="Teucke M."/>
            <person name="Lanz C."/>
            <person name="Raddatz G."/>
            <person name="Osoegawa K."/>
            <person name="Zhu B."/>
            <person name="Rapp A."/>
            <person name="Widaa S."/>
            <person name="Langford C."/>
            <person name="Yang F."/>
            <person name="Schuster S.C."/>
            <person name="Carter N.P."/>
            <person name="Harrow J."/>
            <person name="Ning Z."/>
            <person name="Herrero J."/>
            <person name="Searle S.M."/>
            <person name="Enright A."/>
            <person name="Geisler R."/>
            <person name="Plasterk R.H."/>
            <person name="Lee C."/>
            <person name="Westerfield M."/>
            <person name="de Jong P.J."/>
            <person name="Zon L.I."/>
            <person name="Postlethwait J.H."/>
            <person name="Nusslein-Volhard C."/>
            <person name="Hubbard T.J."/>
            <person name="Roest Crollius H."/>
            <person name="Rogers J."/>
            <person name="Stemple D.L."/>
        </authorList>
    </citation>
    <scope>NUCLEOTIDE SEQUENCE [LARGE SCALE GENOMIC DNA]</scope>
    <source>
        <strain>Tuebingen</strain>
    </source>
</reference>
<feature type="chain" id="PRO_0000320669" description="A-kinase anchor protein SPHKAP">
    <location>
        <begin position="1"/>
        <end position="1596"/>
    </location>
</feature>
<feature type="region of interest" description="Disordered" evidence="2">
    <location>
        <begin position="214"/>
        <end position="233"/>
    </location>
</feature>
<feature type="region of interest" description="Disordered" evidence="2">
    <location>
        <begin position="242"/>
        <end position="319"/>
    </location>
</feature>
<feature type="region of interest" description="Disordered" evidence="2">
    <location>
        <begin position="389"/>
        <end position="432"/>
    </location>
</feature>
<feature type="region of interest" description="Disordered" evidence="2">
    <location>
        <begin position="462"/>
        <end position="481"/>
    </location>
</feature>
<feature type="region of interest" description="Disordered" evidence="2">
    <location>
        <begin position="760"/>
        <end position="809"/>
    </location>
</feature>
<feature type="region of interest" description="PKA-RII subunit binding domain" evidence="1">
    <location>
        <begin position="829"/>
        <end position="846"/>
    </location>
</feature>
<feature type="region of interest" description="Disordered" evidence="2">
    <location>
        <begin position="958"/>
        <end position="1022"/>
    </location>
</feature>
<feature type="region of interest" description="Disordered" evidence="2">
    <location>
        <begin position="1282"/>
        <end position="1310"/>
    </location>
</feature>
<feature type="region of interest" description="Disordered" evidence="2">
    <location>
        <begin position="1328"/>
        <end position="1443"/>
    </location>
</feature>
<feature type="compositionally biased region" description="Polar residues" evidence="2">
    <location>
        <begin position="292"/>
        <end position="306"/>
    </location>
</feature>
<feature type="compositionally biased region" description="Acidic residues" evidence="2">
    <location>
        <begin position="462"/>
        <end position="479"/>
    </location>
</feature>
<feature type="compositionally biased region" description="Polar residues" evidence="2">
    <location>
        <begin position="959"/>
        <end position="971"/>
    </location>
</feature>
<feature type="compositionally biased region" description="Basic and acidic residues" evidence="2">
    <location>
        <begin position="1333"/>
        <end position="1356"/>
    </location>
</feature>
<feature type="compositionally biased region" description="Polar residues" evidence="2">
    <location>
        <begin position="1357"/>
        <end position="1372"/>
    </location>
</feature>
<feature type="compositionally biased region" description="Low complexity" evidence="2">
    <location>
        <begin position="1398"/>
        <end position="1409"/>
    </location>
</feature>
<feature type="compositionally biased region" description="Low complexity" evidence="2">
    <location>
        <begin position="1430"/>
        <end position="1443"/>
    </location>
</feature>
<sequence>MPLLFFALAGCDGSPLCGGLSQRNQFVRLACSVTNFQSSAMFEGSESANTQEVKSESTLGSSLSACKKVLCSNSVLDSSEYWLKNDKTLCRIGFLEDQHDSGCPTICFVNLDRHTSDWHDDNYIKKLASVCPELPRLIESLGVRQPKENEILLLSSLEPPDSCQHDPSHPQSPRTADVCLVHCSCGRRPTQTSSIIFEINKFLIGLQSGQERQKHGRLAGQRAAEDDTNRSVSSIEEDFLTASEQLGEDSEEDPFRNDPENSLMPESVKVLRAAHAQKRSEIEREDSEDSETLCTSSNSQKLSRTYSAPARGRPTTPKQVKESAGHYATNLAESVLQDAFIRLSQDEPSFVAEAAVSVSSDISHSTEAPQRARACSFELPKIVIVQSPDNSEEVTEWPEVQSHATSEHDSGNKAKAKHGTHPPHNSPVGHPAKPLEIALACAASVIGTITTPQVTEQLTLESGEEYECEDEEEESETDQGEYSFSSAVCGMSQVAGAVAAVDLADDSGDNEDLADMYSASMGLLSVAQASTAIPLHCSIAEGTSVEAFRANVAEVLLREASAVFTHRQSYSSVANFLETTHNKIVDGITNPRRPYQEQQDVDNFTQEISDSIFQYALEKAEKRKELEGPGKDAPNIEGFLSDCVNNLLFDVLCVTSRKISDISNCNMESCDGQEGSVGYRAYEADSKAGREALSQLQHLIEPSQAYNHGERRSSVEKLSALIGKREREQKHIQEERENEARLKEPYRLALNRVTATMVKEQSDLQGQLGRSDKNADSALPSAESSPLHMQRGRAGGESETRQQSLSSSSGALVALKMDSGESKTPVTCFAEDLATTVVSMATELAAICLENSSGKQPWFCALNGGSEGPEGLLLPCRTAAALRRKETQNGTSVTKKHRPPRLSEIKRKTEEQPELMERLVNRVVDETVNLDEPTTTDPFALFASEVTARIMNCPELSVVDTSKSGQSSRSRLQCERWSSRGKASSYESIPEEDADPSGTSNTLGPGNRLGHNLSRGSSISKQSSCESITDEFSRFMVNQMETEGRGFDLLLDYYAGKNASSILAAAVQQAASKKNGHLNVRTSSCLSKQSSTESITEEFYRFMLKDMDKENKDYSMTKTKEWSNSLLPPSPRTPFCIRQSSVPDRRSSDSRLTVNSPIKANSFDGFAQNVHGDSLNIYPTNSVSSSGLCKSDSCLYKRGQTDQITDMLIHETWSSSIESLMRKNKIIAEPSEDSLELDSADSQPHVQQFANRLAADIVESGKSQLGGQQDVTAAACQPHIPVGERRHGFKHSRCNNSGNRPGVEHQENSCSSYSSSCVRQAWRGQREVPLIHIEPDQREEASEEKGGVETHHREASHQTQQQSGKGSETATKSSSDSDRVSSVATVPPAGVEVERRSLSASSEESGSGSWAQIATEDDPQEETTSSFIQLSEGNGNSSTSSLGLADLEGFPDFSISSNLISEERERKTSHCQDQADVTLVVLSEVTSGLSTAGSSCQRELLVLNCDLEPDCVDGELRAALQWISASELGVPALYFRKTHQHNLTKLHRVLQLAGQKAWRVGDLFSAVAQFCQLHQDLELKGRPLPSLFDWILKTKR</sequence>
<protein>
    <recommendedName>
        <fullName>A-kinase anchor protein SPHKAP</fullName>
    </recommendedName>
    <alternativeName>
        <fullName>SPHK1-interactor and AKAP domain-containing protein</fullName>
    </alternativeName>
</protein>
<evidence type="ECO:0000250" key="1"/>
<evidence type="ECO:0000256" key="2">
    <source>
        <dbReference type="SAM" id="MobiDB-lite"/>
    </source>
</evidence>
<evidence type="ECO:0000305" key="3"/>
<gene>
    <name type="primary">sphkap</name>
    <name type="ORF">si:dkey-223n17.6</name>
    <name type="ORF">si:dkey-99o15.1</name>
</gene>